<evidence type="ECO:0000250" key="1">
    <source>
        <dbReference type="UniProtKB" id="Q9Y2J8"/>
    </source>
</evidence>
<evidence type="ECO:0000269" key="2">
    <source>
    </source>
</evidence>
<evidence type="ECO:0000269" key="3">
    <source>
    </source>
</evidence>
<evidence type="ECO:0000305" key="4"/>
<gene>
    <name type="primary">Padi2</name>
    <name type="synonym">Pad2</name>
    <name type="synonym">Pdi</name>
    <name type="synonym">Pdi2</name>
</gene>
<dbReference type="EC" id="3.5.3.15" evidence="1"/>
<dbReference type="EMBL" id="D16580">
    <property type="protein sequence ID" value="BAA04012.1"/>
    <property type="molecule type" value="mRNA"/>
</dbReference>
<dbReference type="EMBL" id="AB121692">
    <property type="protein sequence ID" value="BAD16624.1"/>
    <property type="molecule type" value="Genomic_DNA"/>
</dbReference>
<dbReference type="EMBL" id="AL645625">
    <property type="status" value="NOT_ANNOTATED_CDS"/>
    <property type="molecule type" value="Genomic_DNA"/>
</dbReference>
<dbReference type="EMBL" id="AL807805">
    <property type="status" value="NOT_ANNOTATED_CDS"/>
    <property type="molecule type" value="Genomic_DNA"/>
</dbReference>
<dbReference type="EMBL" id="BC040350">
    <property type="protein sequence ID" value="AAH40350.1"/>
    <property type="molecule type" value="mRNA"/>
</dbReference>
<dbReference type="EMBL" id="BC049947">
    <property type="protein sequence ID" value="AAH49947.1"/>
    <property type="molecule type" value="mRNA"/>
</dbReference>
<dbReference type="CCDS" id="CCDS18857.1"/>
<dbReference type="PIR" id="S35038">
    <property type="entry name" value="DIMSR1"/>
</dbReference>
<dbReference type="RefSeq" id="NP_032838.2">
    <property type="nucleotide sequence ID" value="NM_008812.3"/>
</dbReference>
<dbReference type="SMR" id="Q08642"/>
<dbReference type="BioGRID" id="202093">
    <property type="interactions" value="2"/>
</dbReference>
<dbReference type="FunCoup" id="Q08642">
    <property type="interactions" value="65"/>
</dbReference>
<dbReference type="STRING" id="10090.ENSMUSP00000030765"/>
<dbReference type="BindingDB" id="Q08642"/>
<dbReference type="ChEMBL" id="CHEMBL2321611"/>
<dbReference type="GlyGen" id="Q08642">
    <property type="glycosylation" value="1 site, 1 O-linked glycan (1 site)"/>
</dbReference>
<dbReference type="iPTMnet" id="Q08642"/>
<dbReference type="PhosphoSitePlus" id="Q08642"/>
<dbReference type="SwissPalm" id="Q08642"/>
<dbReference type="jPOST" id="Q08642"/>
<dbReference type="PaxDb" id="10090-ENSMUSP00000030765"/>
<dbReference type="PeptideAtlas" id="Q08642"/>
<dbReference type="ProteomicsDB" id="294148"/>
<dbReference type="Antibodypedia" id="29317">
    <property type="antibodies" value="270 antibodies from 28 providers"/>
</dbReference>
<dbReference type="DNASU" id="18600"/>
<dbReference type="Ensembl" id="ENSMUST00000030765.7">
    <property type="protein sequence ID" value="ENSMUSP00000030765.7"/>
    <property type="gene ID" value="ENSMUSG00000028927.7"/>
</dbReference>
<dbReference type="GeneID" id="18600"/>
<dbReference type="KEGG" id="mmu:18600"/>
<dbReference type="UCSC" id="uc008vni.2">
    <property type="organism name" value="mouse"/>
</dbReference>
<dbReference type="AGR" id="MGI:1338892"/>
<dbReference type="CTD" id="11240"/>
<dbReference type="MGI" id="MGI:1338892">
    <property type="gene designation" value="Padi2"/>
</dbReference>
<dbReference type="VEuPathDB" id="HostDB:ENSMUSG00000028927"/>
<dbReference type="eggNOG" id="ENOG502QVJA">
    <property type="taxonomic scope" value="Eukaryota"/>
</dbReference>
<dbReference type="GeneTree" id="ENSGT00940000153217"/>
<dbReference type="HOGENOM" id="CLU_021911_0_0_1"/>
<dbReference type="InParanoid" id="Q08642"/>
<dbReference type="OMA" id="NHYFQRC"/>
<dbReference type="OrthoDB" id="5102063at2759"/>
<dbReference type="PhylomeDB" id="Q08642"/>
<dbReference type="TreeFam" id="TF331952"/>
<dbReference type="BRENDA" id="3.5.3.15">
    <property type="organism ID" value="3474"/>
</dbReference>
<dbReference type="Reactome" id="R-MMU-3247509">
    <property type="pathway name" value="Chromatin modifying enzymes"/>
</dbReference>
<dbReference type="Reactome" id="R-MMU-6798695">
    <property type="pathway name" value="Neutrophil degranulation"/>
</dbReference>
<dbReference type="BioGRID-ORCS" id="18600">
    <property type="hits" value="5 hits in 78 CRISPR screens"/>
</dbReference>
<dbReference type="ChiTaRS" id="Padi2">
    <property type="organism name" value="mouse"/>
</dbReference>
<dbReference type="PRO" id="PR:Q08642"/>
<dbReference type="Proteomes" id="UP000000589">
    <property type="component" value="Chromosome 4"/>
</dbReference>
<dbReference type="RNAct" id="Q08642">
    <property type="molecule type" value="protein"/>
</dbReference>
<dbReference type="Bgee" id="ENSMUSG00000028927">
    <property type="expression patterns" value="Expressed in vestibular membrane of cochlear duct and 151 other cell types or tissues"/>
</dbReference>
<dbReference type="GO" id="GO:0005737">
    <property type="term" value="C:cytoplasm"/>
    <property type="evidence" value="ECO:0007669"/>
    <property type="project" value="UniProtKB-SubCell"/>
</dbReference>
<dbReference type="GO" id="GO:0000791">
    <property type="term" value="C:euchromatin"/>
    <property type="evidence" value="ECO:0007669"/>
    <property type="project" value="Ensembl"/>
</dbReference>
<dbReference type="GO" id="GO:0005509">
    <property type="term" value="F:calcium ion binding"/>
    <property type="evidence" value="ECO:0007669"/>
    <property type="project" value="InterPro"/>
</dbReference>
<dbReference type="GO" id="GO:0140798">
    <property type="term" value="F:histone H3R26 arginine deiminase activity"/>
    <property type="evidence" value="ECO:0007669"/>
    <property type="project" value="Ensembl"/>
</dbReference>
<dbReference type="GO" id="GO:0030331">
    <property type="term" value="F:nuclear estrogen receptor binding"/>
    <property type="evidence" value="ECO:0007669"/>
    <property type="project" value="Ensembl"/>
</dbReference>
<dbReference type="GO" id="GO:0042803">
    <property type="term" value="F:protein homodimerization activity"/>
    <property type="evidence" value="ECO:0000250"/>
    <property type="project" value="UniProtKB"/>
</dbReference>
<dbReference type="GO" id="GO:0004668">
    <property type="term" value="F:protein-arginine deiminase activity"/>
    <property type="evidence" value="ECO:0000250"/>
    <property type="project" value="UniProtKB"/>
</dbReference>
<dbReference type="GO" id="GO:1990830">
    <property type="term" value="P:cellular response to leukemia inhibitory factor"/>
    <property type="evidence" value="ECO:0000270"/>
    <property type="project" value="MGI"/>
</dbReference>
<dbReference type="GO" id="GO:0030520">
    <property type="term" value="P:estrogen receptor signaling pathway"/>
    <property type="evidence" value="ECO:0007669"/>
    <property type="project" value="Ensembl"/>
</dbReference>
<dbReference type="GO" id="GO:0070100">
    <property type="term" value="P:negative regulation of chemokine-mediated signaling pathway"/>
    <property type="evidence" value="ECO:0007669"/>
    <property type="project" value="Ensembl"/>
</dbReference>
<dbReference type="GO" id="GO:1901624">
    <property type="term" value="P:negative regulation of lymphocyte chemotaxis"/>
    <property type="evidence" value="ECO:0007669"/>
    <property type="project" value="Ensembl"/>
</dbReference>
<dbReference type="GO" id="GO:0045815">
    <property type="term" value="P:transcription initiation-coupled chromatin remodeling"/>
    <property type="evidence" value="ECO:0007669"/>
    <property type="project" value="Ensembl"/>
</dbReference>
<dbReference type="CDD" id="cd04214">
    <property type="entry name" value="PAD_N"/>
    <property type="match status" value="1"/>
</dbReference>
<dbReference type="FunFam" id="2.60.40.1700:FF:000001">
    <property type="entry name" value="Protein-arginine deiminase type-2"/>
    <property type="match status" value="1"/>
</dbReference>
<dbReference type="FunFam" id="2.60.40.1860:FF:000001">
    <property type="entry name" value="Protein-arginine deiminase type-2"/>
    <property type="match status" value="1"/>
</dbReference>
<dbReference type="FunFam" id="3.75.10.10:FF:000003">
    <property type="entry name" value="Protein-arginine deiminase type-2"/>
    <property type="match status" value="1"/>
</dbReference>
<dbReference type="Gene3D" id="3.75.10.10">
    <property type="entry name" value="L-arginine/glycine Amidinotransferase, Chain A"/>
    <property type="match status" value="1"/>
</dbReference>
<dbReference type="Gene3D" id="2.60.40.1700">
    <property type="entry name" value="Protein-arginine deiminase, central domain"/>
    <property type="match status" value="1"/>
</dbReference>
<dbReference type="Gene3D" id="2.60.40.1860">
    <property type="entry name" value="Protein-arginine deiminase, N-terminal domain"/>
    <property type="match status" value="1"/>
</dbReference>
<dbReference type="InterPro" id="IPR008972">
    <property type="entry name" value="Cupredoxin"/>
</dbReference>
<dbReference type="InterPro" id="IPR004303">
    <property type="entry name" value="PAD"/>
</dbReference>
<dbReference type="InterPro" id="IPR013530">
    <property type="entry name" value="PAD_C"/>
</dbReference>
<dbReference type="InterPro" id="IPR036556">
    <property type="entry name" value="PAD_central_sf"/>
</dbReference>
<dbReference type="InterPro" id="IPR013732">
    <property type="entry name" value="PAD_N"/>
</dbReference>
<dbReference type="InterPro" id="IPR038685">
    <property type="entry name" value="PAD_N_sf"/>
</dbReference>
<dbReference type="InterPro" id="IPR013733">
    <property type="entry name" value="Prot_Arg_deaminase_cen_dom"/>
</dbReference>
<dbReference type="PANTHER" id="PTHR10837">
    <property type="entry name" value="PEPTIDYLARGININE DEIMINASE"/>
    <property type="match status" value="1"/>
</dbReference>
<dbReference type="PANTHER" id="PTHR10837:SF12">
    <property type="entry name" value="PROTEIN-ARGININE DEIMINASE TYPE-2"/>
    <property type="match status" value="1"/>
</dbReference>
<dbReference type="Pfam" id="PF03068">
    <property type="entry name" value="PAD"/>
    <property type="match status" value="1"/>
</dbReference>
<dbReference type="Pfam" id="PF08527">
    <property type="entry name" value="PAD_M"/>
    <property type="match status" value="1"/>
</dbReference>
<dbReference type="Pfam" id="PF08526">
    <property type="entry name" value="PAD_N"/>
    <property type="match status" value="1"/>
</dbReference>
<dbReference type="PIRSF" id="PIRSF001247">
    <property type="entry name" value="Protein-arginine_deiminase"/>
    <property type="match status" value="1"/>
</dbReference>
<dbReference type="SUPFAM" id="SSF49503">
    <property type="entry name" value="Cupredoxins"/>
    <property type="match status" value="1"/>
</dbReference>
<dbReference type="SUPFAM" id="SSF55909">
    <property type="entry name" value="Pentein"/>
    <property type="match status" value="1"/>
</dbReference>
<dbReference type="SUPFAM" id="SSF110083">
    <property type="entry name" value="Peptidylarginine deiminase Pad4, middle domain"/>
    <property type="match status" value="1"/>
</dbReference>
<organism>
    <name type="scientific">Mus musculus</name>
    <name type="common">Mouse</name>
    <dbReference type="NCBI Taxonomy" id="10090"/>
    <lineage>
        <taxon>Eukaryota</taxon>
        <taxon>Metazoa</taxon>
        <taxon>Chordata</taxon>
        <taxon>Craniata</taxon>
        <taxon>Vertebrata</taxon>
        <taxon>Euteleostomi</taxon>
        <taxon>Mammalia</taxon>
        <taxon>Eutheria</taxon>
        <taxon>Euarchontoglires</taxon>
        <taxon>Glires</taxon>
        <taxon>Rodentia</taxon>
        <taxon>Myomorpha</taxon>
        <taxon>Muroidea</taxon>
        <taxon>Muridae</taxon>
        <taxon>Murinae</taxon>
        <taxon>Mus</taxon>
        <taxon>Mus</taxon>
    </lineage>
</organism>
<feature type="chain" id="PRO_0000220027" description="Protein-arginine deiminase type-2">
    <location>
        <begin position="1"/>
        <end position="673"/>
    </location>
</feature>
<feature type="active site" description="Nucleophile" evidence="1">
    <location>
        <position position="655"/>
    </location>
</feature>
<feature type="binding site" evidence="1">
    <location>
        <position position="131"/>
    </location>
    <ligand>
        <name>Ca(2+)</name>
        <dbReference type="ChEBI" id="CHEBI:29108"/>
        <label>1</label>
    </ligand>
</feature>
<feature type="binding site" evidence="1">
    <location>
        <position position="133"/>
    </location>
    <ligand>
        <name>Ca(2+)</name>
        <dbReference type="ChEBI" id="CHEBI:29108"/>
        <label>1</label>
    </ligand>
</feature>
<feature type="binding site" evidence="1">
    <location>
        <position position="135"/>
    </location>
    <ligand>
        <name>Ca(2+)</name>
        <dbReference type="ChEBI" id="CHEBI:29108"/>
        <label>1</label>
    </ligand>
</feature>
<feature type="binding site" evidence="1">
    <location>
        <position position="139"/>
    </location>
    <ligand>
        <name>Ca(2+)</name>
        <dbReference type="ChEBI" id="CHEBI:29108"/>
        <label>1</label>
    </ligand>
</feature>
<feature type="binding site" evidence="1">
    <location>
        <position position="162"/>
    </location>
    <ligand>
        <name>Ca(2+)</name>
        <dbReference type="ChEBI" id="CHEBI:29108"/>
        <label>2</label>
    </ligand>
</feature>
<feature type="binding site" evidence="1">
    <location>
        <position position="164"/>
    </location>
    <ligand>
        <name>Ca(2+)</name>
        <dbReference type="ChEBI" id="CHEBI:29108"/>
        <label>2</label>
    </ligand>
</feature>
<feature type="binding site" evidence="1">
    <location>
        <position position="164"/>
    </location>
    <ligand>
        <name>Ca(2+)</name>
        <dbReference type="ChEBI" id="CHEBI:29108"/>
        <label>3</label>
    </ligand>
</feature>
<feature type="binding site" evidence="1">
    <location>
        <position position="166"/>
    </location>
    <ligand>
        <name>Ca(2+)</name>
        <dbReference type="ChEBI" id="CHEBI:29108"/>
        <label>2</label>
    </ligand>
</feature>
<feature type="binding site" evidence="1">
    <location>
        <position position="166"/>
    </location>
    <ligand>
        <name>Ca(2+)</name>
        <dbReference type="ChEBI" id="CHEBI:29108"/>
        <label>3</label>
    </ligand>
</feature>
<feature type="binding site" evidence="1">
    <location>
        <position position="174"/>
    </location>
    <ligand>
        <name>Ca(2+)</name>
        <dbReference type="ChEBI" id="CHEBI:29108"/>
        <label>2</label>
    </ligand>
</feature>
<feature type="binding site" evidence="1">
    <location>
        <position position="174"/>
    </location>
    <ligand>
        <name>Ca(2+)</name>
        <dbReference type="ChEBI" id="CHEBI:29108"/>
        <label>4</label>
    </ligand>
</feature>
<feature type="binding site" evidence="1">
    <location>
        <position position="177"/>
    </location>
    <ligand>
        <name>Ca(2+)</name>
        <dbReference type="ChEBI" id="CHEBI:29108"/>
        <label>4</label>
    </ligand>
</feature>
<feature type="binding site" evidence="1">
    <location>
        <position position="179"/>
    </location>
    <ligand>
        <name>Ca(2+)</name>
        <dbReference type="ChEBI" id="CHEBI:29108"/>
        <label>4</label>
    </ligand>
</feature>
<feature type="binding site" evidence="1">
    <location>
        <position position="185"/>
    </location>
    <ligand>
        <name>Ca(2+)</name>
        <dbReference type="ChEBI" id="CHEBI:29108"/>
        <label>2</label>
    </ligand>
</feature>
<feature type="binding site" evidence="1">
    <location>
        <position position="188"/>
    </location>
    <ligand>
        <name>Ca(2+)</name>
        <dbReference type="ChEBI" id="CHEBI:29108"/>
        <label>2</label>
    </ligand>
</feature>
<feature type="binding site" evidence="1">
    <location>
        <position position="188"/>
    </location>
    <ligand>
        <name>Ca(2+)</name>
        <dbReference type="ChEBI" id="CHEBI:29108"/>
        <label>3</label>
    </ligand>
</feature>
<feature type="binding site" evidence="1">
    <location>
        <position position="362"/>
    </location>
    <ligand>
        <name>Ca(2+)</name>
        <dbReference type="ChEBI" id="CHEBI:29108"/>
        <label>5</label>
    </ligand>
</feature>
<feature type="binding site" evidence="1">
    <location>
        <position position="397"/>
    </location>
    <ligand>
        <name>Ca(2+)</name>
        <dbReference type="ChEBI" id="CHEBI:29108"/>
        <label>3</label>
    </ligand>
</feature>
<feature type="binding site" evidence="1">
    <location>
        <position position="416"/>
    </location>
    <ligand>
        <name>Ca(2+)</name>
        <dbReference type="ChEBI" id="CHEBI:29108"/>
        <label>5</label>
    </ligand>
</feature>
<feature type="binding site" evidence="1">
    <location>
        <position position="419"/>
    </location>
    <ligand>
        <name>Ca(2+)</name>
        <dbReference type="ChEBI" id="CHEBI:29108"/>
        <label>5</label>
    </ligand>
</feature>
<feature type="binding site" evidence="1">
    <location>
        <position position="420"/>
    </location>
    <ligand>
        <name>Ca(2+)</name>
        <dbReference type="ChEBI" id="CHEBI:29108"/>
        <label>5</label>
    </ligand>
</feature>
<feature type="modified residue" description="N-acetylmethionine" evidence="3">
    <location>
        <position position="1"/>
    </location>
</feature>
<feature type="modified residue" description="Citrulline" evidence="3">
    <location>
        <position position="352"/>
    </location>
</feature>
<feature type="sequence conflict" description="In Ref. 1; BAA04012 and 4; AAH40350/AAH49947." evidence="4" ref="1 4">
    <original>T</original>
    <variation>A</variation>
    <location>
        <position position="665"/>
    </location>
</feature>
<sequence>MQPPIRENMLRERTVRLQYGSRVEAVYVLGTQLWTDVYSAAPAGAKTFSLKHSEGVKVEVVRDGEAEEVVTNGKQRWALSPSSTLRLSMAQASTEASSDKVTVNYYEEEGSAPIDQAGLFLTAIEISLDVDADRDGEVEKNNPKKASWTWGPEGQGAILLVNCDRDTPWLPKEDCSDEKVYSKQDLQDMSQMILRTKGPDRLPAGYEIVLYISMSDSDKVGVFYVENPFFGQRYIHILGRQKLYHVVKYTGGSAELLFFVEGLCFPDESFSGLVSIHVSLLEYMAEGIPLTPIFTDTVMFRIAPWIMTPNILPPVSVFVCCMKDNYLFLKEVKNLVEKTNCELKVCFQYMNRGDRWIQDEIEFGYIEAPHKGFPVVLDSPRDGNLKDFPIKQLLGPDFGYVTREPLFETVTSLDSFGNLEVSPPVTVNGKEYPLGRILIGSSFPLSGGRRMTKVVRDFLQAQQVQAPVELYSDWLTVGHVDEFMTFIPIPGKKEFRLLMASTSACYQLFREKQKAGHGEAVMFKGLGGMSSKRITINKILSNESLTQENQYFQRCLDWNRDILKRELALTEKDIIDLPALFKMDENHQARAFFPNMVNMIVLDKDLGIPKPFGPQVEEECCLETHVRGLLEPLGLACTFIDDISAYHKFLGEVHCGTNVRRKPFTFKWWHMVP</sequence>
<name>PADI2_MOUSE</name>
<comment type="function">
    <text evidence="1">Catalyzes the deimination of arginine residues of proteins.</text>
</comment>
<comment type="catalytic activity">
    <reaction evidence="1">
        <text>L-arginyl-[protein] + H2O = L-citrullyl-[protein] + NH4(+)</text>
        <dbReference type="Rhea" id="RHEA:18089"/>
        <dbReference type="Rhea" id="RHEA-COMP:10532"/>
        <dbReference type="Rhea" id="RHEA-COMP:10588"/>
        <dbReference type="ChEBI" id="CHEBI:15377"/>
        <dbReference type="ChEBI" id="CHEBI:28938"/>
        <dbReference type="ChEBI" id="CHEBI:29965"/>
        <dbReference type="ChEBI" id="CHEBI:83397"/>
        <dbReference type="EC" id="3.5.3.15"/>
    </reaction>
</comment>
<comment type="cofactor">
    <cofactor evidence="1">
        <name>Ca(2+)</name>
        <dbReference type="ChEBI" id="CHEBI:29108"/>
    </cofactor>
    <text evidence="1">Binding of Ca(2+) triggers a conformation change that is essential for catalytic activity.</text>
</comment>
<comment type="subunit">
    <text evidence="1">Homodimer.</text>
</comment>
<comment type="subcellular location">
    <subcellularLocation>
        <location evidence="1">Cytoplasm</location>
    </subcellularLocation>
</comment>
<comment type="tissue specificity">
    <text evidence="2">Expressed in various tissues including muscle, uterus, spinal cord, salivary gland and pancreas.</text>
</comment>
<comment type="developmental stage">
    <text>Expressed during the estrus cycle. Expressed during diestrus and proestrus with an eight fold decline when estrus cycle is reached.</text>
</comment>
<comment type="similarity">
    <text evidence="4">Belongs to the protein arginine deiminase family.</text>
</comment>
<proteinExistence type="evidence at protein level"/>
<accession>Q08642</accession>
<accession>Q75WD0</accession>
<reference key="1">
    <citation type="journal article" date="1993" name="Eur. J. Biochem.">
        <title>cDNA nucleotide sequence and primary structure of mouse uterine peptidylarginine deiminase. Detection of a 3'-untranslated nucleotide sequence common to the mRNA of transiently expressed genes and rapid turnover of this enzyme's mRNA in the estrous cycle.</title>
        <authorList>
            <person name="Tsuchida M."/>
            <person name="Takahara H."/>
            <person name="Minami N."/>
            <person name="Arai T."/>
            <person name="Kobayashi Y."/>
            <person name="Tsujimoto H."/>
            <person name="Fukazawa C."/>
            <person name="Sugawara K."/>
        </authorList>
    </citation>
    <scope>NUCLEOTIDE SEQUENCE [MRNA]</scope>
    <scope>ACETYLATION AT MET-1</scope>
    <scope>CITRULLINATION AT ARG-352</scope>
    <scope>PARTIAL PROTEIN SEQUENCE</scope>
</reference>
<reference key="2">
    <citation type="journal article" date="2004" name="Gene">
        <title>Comparative analysis of the mouse and human peptidylarginine deiminase gene clusters reveals highly conserved non-coding segments and a new human gene, PADI6.</title>
        <authorList>
            <person name="Chavanas S."/>
            <person name="Mechin M.-C."/>
            <person name="Takahara H."/>
            <person name="Kawada A."/>
            <person name="Nachat R."/>
            <person name="Serre G."/>
            <person name="Simon M."/>
        </authorList>
    </citation>
    <scope>NUCLEOTIDE SEQUENCE [GENOMIC DNA]</scope>
    <source>
        <strain>129/SvJ</strain>
    </source>
</reference>
<reference key="3">
    <citation type="journal article" date="2009" name="PLoS Biol.">
        <title>Lineage-specific biology revealed by a finished genome assembly of the mouse.</title>
        <authorList>
            <person name="Church D.M."/>
            <person name="Goodstadt L."/>
            <person name="Hillier L.W."/>
            <person name="Zody M.C."/>
            <person name="Goldstein S."/>
            <person name="She X."/>
            <person name="Bult C.J."/>
            <person name="Agarwala R."/>
            <person name="Cherry J.L."/>
            <person name="DiCuccio M."/>
            <person name="Hlavina W."/>
            <person name="Kapustin Y."/>
            <person name="Meric P."/>
            <person name="Maglott D."/>
            <person name="Birtle Z."/>
            <person name="Marques A.C."/>
            <person name="Graves T."/>
            <person name="Zhou S."/>
            <person name="Teague B."/>
            <person name="Potamousis K."/>
            <person name="Churas C."/>
            <person name="Place M."/>
            <person name="Herschleb J."/>
            <person name="Runnheim R."/>
            <person name="Forrest D."/>
            <person name="Amos-Landgraf J."/>
            <person name="Schwartz D.C."/>
            <person name="Cheng Z."/>
            <person name="Lindblad-Toh K."/>
            <person name="Eichler E.E."/>
            <person name="Ponting C.P."/>
        </authorList>
    </citation>
    <scope>NUCLEOTIDE SEQUENCE [LARGE SCALE GENOMIC DNA]</scope>
    <source>
        <strain>C57BL/6J</strain>
    </source>
</reference>
<reference key="4">
    <citation type="journal article" date="2004" name="Genome Res.">
        <title>The status, quality, and expansion of the NIH full-length cDNA project: the Mammalian Gene Collection (MGC).</title>
        <authorList>
            <consortium name="The MGC Project Team"/>
        </authorList>
    </citation>
    <scope>NUCLEOTIDE SEQUENCE [LARGE SCALE MRNA]</scope>
    <source>
        <strain>FVB/N</strain>
        <tissue>Mammary gland</tissue>
        <tissue>Salivary gland</tissue>
    </source>
</reference>
<reference key="5">
    <citation type="journal article" date="1991" name="J. Biochem.">
        <title>Three types of mouse peptidylarginine deiminase: characterization and tissue distribution.</title>
        <authorList>
            <person name="Terakawa H."/>
            <person name="Takahara H."/>
            <person name="Sugawara K."/>
        </authorList>
    </citation>
    <scope>CHARACTERIZATION</scope>
    <scope>TISSUE SPECIFICITY</scope>
</reference>
<reference key="6">
    <citation type="journal article" date="2010" name="Cell">
        <title>A tissue-specific atlas of mouse protein phosphorylation and expression.</title>
        <authorList>
            <person name="Huttlin E.L."/>
            <person name="Jedrychowski M.P."/>
            <person name="Elias J.E."/>
            <person name="Goswami T."/>
            <person name="Rad R."/>
            <person name="Beausoleil S.A."/>
            <person name="Villen J."/>
            <person name="Haas W."/>
            <person name="Sowa M.E."/>
            <person name="Gygi S.P."/>
        </authorList>
    </citation>
    <scope>IDENTIFICATION BY MASS SPECTROMETRY [LARGE SCALE ANALYSIS]</scope>
    <source>
        <tissue>Brain</tissue>
        <tissue>Brown adipose tissue</tissue>
        <tissue>Pancreas</tissue>
        <tissue>Spleen</tissue>
    </source>
</reference>
<protein>
    <recommendedName>
        <fullName>Protein-arginine deiminase type-2</fullName>
        <ecNumber evidence="1">3.5.3.15</ecNumber>
    </recommendedName>
    <alternativeName>
        <fullName>Peptidylarginine deiminase II</fullName>
    </alternativeName>
    <alternativeName>
        <fullName>Protein-arginine deiminase type II</fullName>
    </alternativeName>
</protein>
<keyword id="KW-0007">Acetylation</keyword>
<keyword id="KW-0106">Calcium</keyword>
<keyword id="KW-0164">Citrullination</keyword>
<keyword id="KW-0963">Cytoplasm</keyword>
<keyword id="KW-0903">Direct protein sequencing</keyword>
<keyword id="KW-0378">Hydrolase</keyword>
<keyword id="KW-0479">Metal-binding</keyword>
<keyword id="KW-1185">Reference proteome</keyword>